<reference key="1">
    <citation type="journal article" date="2006" name="BMC Genomics">
        <title>Complete genome sequence of Shigella flexneri 5b and comparison with Shigella flexneri 2a.</title>
        <authorList>
            <person name="Nie H."/>
            <person name="Yang F."/>
            <person name="Zhang X."/>
            <person name="Yang J."/>
            <person name="Chen L."/>
            <person name="Wang J."/>
            <person name="Xiong Z."/>
            <person name="Peng J."/>
            <person name="Sun L."/>
            <person name="Dong J."/>
            <person name="Xue Y."/>
            <person name="Xu X."/>
            <person name="Chen S."/>
            <person name="Yao Z."/>
            <person name="Shen Y."/>
            <person name="Jin Q."/>
        </authorList>
    </citation>
    <scope>NUCLEOTIDE SEQUENCE [LARGE SCALE GENOMIC DNA]</scope>
    <source>
        <strain>8401</strain>
    </source>
</reference>
<sequence length="160" mass="18223">MKLQVLPLSQEAFSAYGDVIETQQRDFFHINNGLVERYHDLALVEILEQDRTLISINRAQPANLPLTIHELERHPLGTQAFIPMKGEVFVVVVALGDDKPDLSTLRAFITNGEQGVNYHRNVWHHPLFAWQRVTDFLTIDRGGSDNCDVESIPEQELCFA</sequence>
<feature type="chain" id="PRO_1000061371" description="Ureidoglycolate lyase">
    <location>
        <begin position="1"/>
        <end position="160"/>
    </location>
</feature>
<dbReference type="EC" id="4.3.2.3" evidence="1"/>
<dbReference type="EMBL" id="CP000266">
    <property type="protein sequence ID" value="ABF02738.1"/>
    <property type="molecule type" value="Genomic_DNA"/>
</dbReference>
<dbReference type="RefSeq" id="WP_000776388.1">
    <property type="nucleotide sequence ID" value="NC_008258.1"/>
</dbReference>
<dbReference type="SMR" id="Q0T788"/>
<dbReference type="GeneID" id="75202348"/>
<dbReference type="KEGG" id="sfv:SFV_0472"/>
<dbReference type="HOGENOM" id="CLU_070848_1_1_6"/>
<dbReference type="UniPathway" id="UPA00395"/>
<dbReference type="Proteomes" id="UP000000659">
    <property type="component" value="Chromosome"/>
</dbReference>
<dbReference type="GO" id="GO:0004848">
    <property type="term" value="F:ureidoglycolate hydrolase activity"/>
    <property type="evidence" value="ECO:0007669"/>
    <property type="project" value="InterPro"/>
</dbReference>
<dbReference type="GO" id="GO:0050385">
    <property type="term" value="F:ureidoglycolate lyase activity"/>
    <property type="evidence" value="ECO:0007669"/>
    <property type="project" value="UniProtKB-UniRule"/>
</dbReference>
<dbReference type="GO" id="GO:0000256">
    <property type="term" value="P:allantoin catabolic process"/>
    <property type="evidence" value="ECO:0007669"/>
    <property type="project" value="UniProtKB-UniRule"/>
</dbReference>
<dbReference type="GO" id="GO:0006145">
    <property type="term" value="P:purine nucleobase catabolic process"/>
    <property type="evidence" value="ECO:0007669"/>
    <property type="project" value="UniProtKB-UniRule"/>
</dbReference>
<dbReference type="CDD" id="cd20298">
    <property type="entry name" value="cupin_UAH"/>
    <property type="match status" value="1"/>
</dbReference>
<dbReference type="FunFam" id="2.60.120.480:FF:000001">
    <property type="entry name" value="Ureidoglycolate lyase"/>
    <property type="match status" value="1"/>
</dbReference>
<dbReference type="Gene3D" id="2.60.120.480">
    <property type="entry name" value="Ureidoglycolate hydrolase"/>
    <property type="match status" value="1"/>
</dbReference>
<dbReference type="HAMAP" id="MF_00616">
    <property type="entry name" value="Ureidogly_lyase"/>
    <property type="match status" value="1"/>
</dbReference>
<dbReference type="InterPro" id="IPR011051">
    <property type="entry name" value="RmlC_Cupin_sf"/>
</dbReference>
<dbReference type="InterPro" id="IPR047233">
    <property type="entry name" value="UAH_cupin"/>
</dbReference>
<dbReference type="InterPro" id="IPR007247">
    <property type="entry name" value="Ureidogly_lyase"/>
</dbReference>
<dbReference type="InterPro" id="IPR023525">
    <property type="entry name" value="Ureidogly_lyase_bac"/>
</dbReference>
<dbReference type="InterPro" id="IPR024060">
    <property type="entry name" value="Ureidoglycolate_lyase_dom_sf"/>
</dbReference>
<dbReference type="NCBIfam" id="NF002948">
    <property type="entry name" value="PRK03606.1-1"/>
    <property type="match status" value="1"/>
</dbReference>
<dbReference type="NCBIfam" id="NF009932">
    <property type="entry name" value="PRK13395.1"/>
    <property type="match status" value="1"/>
</dbReference>
<dbReference type="PANTHER" id="PTHR21221">
    <property type="entry name" value="UREIDOGLYCOLATE HYDROLASE"/>
    <property type="match status" value="1"/>
</dbReference>
<dbReference type="PANTHER" id="PTHR21221:SF1">
    <property type="entry name" value="UREIDOGLYCOLATE LYASE"/>
    <property type="match status" value="1"/>
</dbReference>
<dbReference type="Pfam" id="PF04115">
    <property type="entry name" value="Ureidogly_lyase"/>
    <property type="match status" value="1"/>
</dbReference>
<dbReference type="PIRSF" id="PIRSF017306">
    <property type="entry name" value="Ureidogly_hydro"/>
    <property type="match status" value="1"/>
</dbReference>
<dbReference type="SUPFAM" id="SSF51182">
    <property type="entry name" value="RmlC-like cupins"/>
    <property type="match status" value="1"/>
</dbReference>
<proteinExistence type="inferred from homology"/>
<name>ALLA_SHIF8</name>
<gene>
    <name evidence="1" type="primary">allA</name>
    <name type="ordered locus">SFV_0472</name>
</gene>
<accession>Q0T788</accession>
<comment type="function">
    <text evidence="1">Catalyzes the catabolism of the allantoin degradation intermediate (S)-ureidoglycolate, generating urea and glyoxylate. Involved in the anaerobic utilization of allantoin as sole nitrogen source. Reinforces the induction of genes involved in the degradation of allantoin and glyoxylate by producing glyoxylate.</text>
</comment>
<comment type="catalytic activity">
    <reaction evidence="1">
        <text>(S)-ureidoglycolate = urea + glyoxylate</text>
        <dbReference type="Rhea" id="RHEA:11304"/>
        <dbReference type="ChEBI" id="CHEBI:16199"/>
        <dbReference type="ChEBI" id="CHEBI:36655"/>
        <dbReference type="ChEBI" id="CHEBI:57296"/>
        <dbReference type="EC" id="4.3.2.3"/>
    </reaction>
</comment>
<comment type="cofactor">
    <cofactor evidence="1">
        <name>Ni(2+)</name>
        <dbReference type="ChEBI" id="CHEBI:49786"/>
    </cofactor>
</comment>
<comment type="pathway">
    <text evidence="1">Nitrogen metabolism; (S)-allantoin degradation.</text>
</comment>
<comment type="subunit">
    <text evidence="1">Homodimer.</text>
</comment>
<comment type="similarity">
    <text evidence="1">Belongs to the ureidoglycolate lyase family.</text>
</comment>
<organism>
    <name type="scientific">Shigella flexneri serotype 5b (strain 8401)</name>
    <dbReference type="NCBI Taxonomy" id="373384"/>
    <lineage>
        <taxon>Bacteria</taxon>
        <taxon>Pseudomonadati</taxon>
        <taxon>Pseudomonadota</taxon>
        <taxon>Gammaproteobacteria</taxon>
        <taxon>Enterobacterales</taxon>
        <taxon>Enterobacteriaceae</taxon>
        <taxon>Shigella</taxon>
    </lineage>
</organism>
<protein>
    <recommendedName>
        <fullName evidence="1">Ureidoglycolate lyase</fullName>
        <ecNumber evidence="1">4.3.2.3</ecNumber>
    </recommendedName>
    <alternativeName>
        <fullName evidence="1">Ureidoglycolatase</fullName>
    </alternativeName>
</protein>
<evidence type="ECO:0000255" key="1">
    <source>
        <dbReference type="HAMAP-Rule" id="MF_00616"/>
    </source>
</evidence>
<keyword id="KW-0456">Lyase</keyword>
<keyword id="KW-0659">Purine metabolism</keyword>